<accession>O22755</accession>
<proteinExistence type="evidence at protein level"/>
<feature type="chain" id="PRO_0000055775" description="Probable E3 ubiquitin-protein ligase ATL44">
    <location>
        <begin position="1"/>
        <end position="185"/>
    </location>
</feature>
<feature type="transmembrane region" description="Helical" evidence="2">
    <location>
        <begin position="29"/>
        <end position="49"/>
    </location>
</feature>
<feature type="zinc finger region" description="RING-type; atypical" evidence="3">
    <location>
        <begin position="102"/>
        <end position="144"/>
    </location>
</feature>
<feature type="region of interest" description="Disordered" evidence="4">
    <location>
        <begin position="163"/>
        <end position="185"/>
    </location>
</feature>
<feature type="compositionally biased region" description="Polar residues" evidence="4">
    <location>
        <begin position="176"/>
        <end position="185"/>
    </location>
</feature>
<feature type="mutagenesis site" description="Impaired E3 ubiquitin ligase activity." evidence="5">
    <original>I</original>
    <variation>A</variation>
    <location>
        <position position="104"/>
    </location>
</feature>
<keyword id="KW-0472">Membrane</keyword>
<keyword id="KW-0479">Metal-binding</keyword>
<keyword id="KW-1185">Reference proteome</keyword>
<keyword id="KW-0808">Transferase</keyword>
<keyword id="KW-0812">Transmembrane</keyword>
<keyword id="KW-1133">Transmembrane helix</keyword>
<keyword id="KW-0832">Ubl conjugation</keyword>
<keyword id="KW-0833">Ubl conjugation pathway</keyword>
<keyword id="KW-0862">Zinc</keyword>
<keyword id="KW-0863">Zinc-finger</keyword>
<evidence type="ECO:0000250" key="1"/>
<evidence type="ECO:0000255" key="2"/>
<evidence type="ECO:0000255" key="3">
    <source>
        <dbReference type="PROSITE-ProRule" id="PRU00175"/>
    </source>
</evidence>
<evidence type="ECO:0000256" key="4">
    <source>
        <dbReference type="SAM" id="MobiDB-lite"/>
    </source>
</evidence>
<evidence type="ECO:0000269" key="5">
    <source>
    </source>
</evidence>
<evidence type="ECO:0000269" key="6">
    <source>
    </source>
</evidence>
<evidence type="ECO:0000303" key="7">
    <source>
    </source>
</evidence>
<evidence type="ECO:0000303" key="8">
    <source>
    </source>
</evidence>
<evidence type="ECO:0000305" key="9"/>
<evidence type="ECO:0000312" key="10">
    <source>
        <dbReference type="Araport" id="AT2G17450"/>
    </source>
</evidence>
<evidence type="ECO:0000312" key="11">
    <source>
        <dbReference type="EMBL" id="AAD32903.1"/>
    </source>
</evidence>
<sequence>MTRPSRLLETAAPPPQPSEEMIAAESDMVVILSALLCALICVAGLAAVVRCAWLRRFTAGGDSPSPNKGLKKKALQSLPRSTFTAAESTSGAAAEEGDSTECAICLTDFADGEEIRVLPLCGHSFHVECIDKWLVSRSSCPSCRRILTPVRCDRCGHASTAEMKDQAHRHQHHQHSSTTIPTFLP</sequence>
<name>ATL44_ARATH</name>
<comment type="function">
    <text evidence="5">E3 ubiquitin-protein ligase that possess E3 ubiquitin ligase activity in vitro and mediates protein monoubiquitination (PubMed:32404997). Triggers the monoubiquitination of phosphorylated BIK1 in response to pathogen-associated molecular pattern (PAMP) detection (PubMed:32404997).</text>
</comment>
<comment type="catalytic activity">
    <reaction evidence="9">
        <text>S-ubiquitinyl-[E2 ubiquitin-conjugating enzyme]-L-cysteine + [acceptor protein]-L-lysine = [E2 ubiquitin-conjugating enzyme]-L-cysteine + N(6)-ubiquitinyl-[acceptor protein]-L-lysine.</text>
        <dbReference type="EC" id="2.3.2.27"/>
    </reaction>
</comment>
<comment type="pathway">
    <text evidence="9">Protein modification; protein ubiquitination.</text>
</comment>
<comment type="subunit">
    <text evidence="5">Interacts with BIK1.</text>
</comment>
<comment type="subcellular location">
    <subcellularLocation>
        <location evidence="9">Membrane</location>
        <topology evidence="9">Single-pass membrane protein</topology>
    </subcellularLocation>
</comment>
<comment type="tissue specificity">
    <text evidence="6">Expressed in stems, flowers and green siliques.</text>
</comment>
<comment type="domain">
    <text evidence="1">The RING-type zinc finger domain mediates binding to an E2 ubiquitin-conjugating enzyme.</text>
</comment>
<comment type="PTM">
    <text evidence="5">Auto-monoubiquitination.</text>
</comment>
<comment type="similarity">
    <text evidence="9">Belongs to the RING-type zinc finger family. ATL subfamily.</text>
</comment>
<reference key="1">
    <citation type="journal article" date="1998" name="FEBS Lett.">
        <title>Widespread occurrence of a highly conserved RING-H2 zinc finger motif in the model plant Arabidopsis thaliana.</title>
        <authorList>
            <person name="Jensen R.B."/>
            <person name="Jensen K.L."/>
            <person name="Jespersen H.M."/>
            <person name="Skriver K."/>
        </authorList>
    </citation>
    <scope>NUCLEOTIDE SEQUENCE [MRNA]</scope>
    <scope>TISSUE SPECIFICITY</scope>
    <source>
        <strain>cv. Columbia</strain>
    </source>
</reference>
<reference key="2">
    <citation type="journal article" date="1999" name="Nature">
        <title>Sequence and analysis of chromosome 2 of the plant Arabidopsis thaliana.</title>
        <authorList>
            <person name="Lin X."/>
            <person name="Kaul S."/>
            <person name="Rounsley S.D."/>
            <person name="Shea T.P."/>
            <person name="Benito M.-I."/>
            <person name="Town C.D."/>
            <person name="Fujii C.Y."/>
            <person name="Mason T.M."/>
            <person name="Bowman C.L."/>
            <person name="Barnstead M.E."/>
            <person name="Feldblyum T.V."/>
            <person name="Buell C.R."/>
            <person name="Ketchum K.A."/>
            <person name="Lee J.J."/>
            <person name="Ronning C.M."/>
            <person name="Koo H.L."/>
            <person name="Moffat K.S."/>
            <person name="Cronin L.A."/>
            <person name="Shen M."/>
            <person name="Pai G."/>
            <person name="Van Aken S."/>
            <person name="Umayam L."/>
            <person name="Tallon L.J."/>
            <person name="Gill J.E."/>
            <person name="Adams M.D."/>
            <person name="Carrera A.J."/>
            <person name="Creasy T.H."/>
            <person name="Goodman H.M."/>
            <person name="Somerville C.R."/>
            <person name="Copenhaver G.P."/>
            <person name="Preuss D."/>
            <person name="Nierman W.C."/>
            <person name="White O."/>
            <person name="Eisen J.A."/>
            <person name="Salzberg S.L."/>
            <person name="Fraser C.M."/>
            <person name="Venter J.C."/>
        </authorList>
    </citation>
    <scope>NUCLEOTIDE SEQUENCE [LARGE SCALE GENOMIC DNA]</scope>
    <source>
        <strain>cv. Columbia</strain>
    </source>
</reference>
<reference key="3">
    <citation type="journal article" date="2017" name="Plant J.">
        <title>Araport11: a complete reannotation of the Arabidopsis thaliana reference genome.</title>
        <authorList>
            <person name="Cheng C.Y."/>
            <person name="Krishnakumar V."/>
            <person name="Chan A.P."/>
            <person name="Thibaud-Nissen F."/>
            <person name="Schobel S."/>
            <person name="Town C.D."/>
        </authorList>
    </citation>
    <scope>GENOME REANNOTATION</scope>
    <source>
        <strain>cv. Columbia</strain>
    </source>
</reference>
<reference key="4">
    <citation type="journal article" date="2003" name="Science">
        <title>Empirical analysis of transcriptional activity in the Arabidopsis genome.</title>
        <authorList>
            <person name="Yamada K."/>
            <person name="Lim J."/>
            <person name="Dale J.M."/>
            <person name="Chen H."/>
            <person name="Shinn P."/>
            <person name="Palm C.J."/>
            <person name="Southwick A.M."/>
            <person name="Wu H.C."/>
            <person name="Kim C.J."/>
            <person name="Nguyen M."/>
            <person name="Pham P.K."/>
            <person name="Cheuk R.F."/>
            <person name="Karlin-Newmann G."/>
            <person name="Liu S.X."/>
            <person name="Lam B."/>
            <person name="Sakano H."/>
            <person name="Wu T."/>
            <person name="Yu G."/>
            <person name="Miranda M."/>
            <person name="Quach H.L."/>
            <person name="Tripp M."/>
            <person name="Chang C.H."/>
            <person name="Lee J.M."/>
            <person name="Toriumi M.J."/>
            <person name="Chan M.M."/>
            <person name="Tang C.C."/>
            <person name="Onodera C.S."/>
            <person name="Deng J.M."/>
            <person name="Akiyama K."/>
            <person name="Ansari Y."/>
            <person name="Arakawa T."/>
            <person name="Banh J."/>
            <person name="Banno F."/>
            <person name="Bowser L."/>
            <person name="Brooks S.Y."/>
            <person name="Carninci P."/>
            <person name="Chao Q."/>
            <person name="Choy N."/>
            <person name="Enju A."/>
            <person name="Goldsmith A.D."/>
            <person name="Gurjal M."/>
            <person name="Hansen N.F."/>
            <person name="Hayashizaki Y."/>
            <person name="Johnson-Hopson C."/>
            <person name="Hsuan V.W."/>
            <person name="Iida K."/>
            <person name="Karnes M."/>
            <person name="Khan S."/>
            <person name="Koesema E."/>
            <person name="Ishida J."/>
            <person name="Jiang P.X."/>
            <person name="Jones T."/>
            <person name="Kawai J."/>
            <person name="Kamiya A."/>
            <person name="Meyers C."/>
            <person name="Nakajima M."/>
            <person name="Narusaka M."/>
            <person name="Seki M."/>
            <person name="Sakurai T."/>
            <person name="Satou M."/>
            <person name="Tamse R."/>
            <person name="Vaysberg M."/>
            <person name="Wallender E.K."/>
            <person name="Wong C."/>
            <person name="Yamamura Y."/>
            <person name="Yuan S."/>
            <person name="Shinozaki K."/>
            <person name="Davis R.W."/>
            <person name="Theologis A."/>
            <person name="Ecker J.R."/>
        </authorList>
    </citation>
    <scope>NUCLEOTIDE SEQUENCE [LARGE SCALE MRNA]</scope>
    <source>
        <strain>cv. Columbia</strain>
    </source>
</reference>
<reference key="5">
    <citation type="journal article" date="2002" name="Genome Biol.">
        <title>Evaluation and classification of RING-finger domains encoded by the Arabidopsis genome.</title>
        <authorList>
            <person name="Kosarev P."/>
            <person name="Mayer K.F.X."/>
            <person name="Hardtke C.S."/>
        </authorList>
    </citation>
    <scope>GENE FAMILY ORGANIZATION</scope>
</reference>
<reference key="6">
    <citation type="journal article" date="2006" name="J. Mol. Evol.">
        <title>The ATL gene family from Arabidopsis thaliana and Oryza sativa comprises a large number of putative ubiquitin ligases of the RING-H2 type.</title>
        <authorList>
            <person name="Serrano M."/>
            <person name="Parra S."/>
            <person name="Alcaraz L.D."/>
            <person name="Guzman P."/>
        </authorList>
    </citation>
    <scope>NOMENCLATURE</scope>
    <scope>GENE FAMILY ORGANIZATION</scope>
</reference>
<reference key="7">
    <citation type="journal article" date="2020" name="Nature">
        <title>Ligand-induced monoubiquitination of BIK1 regulates plant immunity.</title>
        <authorList>
            <person name="Ma X."/>
            <person name="Claus L.A.N."/>
            <person name="Leslie M.E."/>
            <person name="Tao K."/>
            <person name="Wu Z."/>
            <person name="Liu J."/>
            <person name="Yu X."/>
            <person name="Li B."/>
            <person name="Zhou J."/>
            <person name="Savatin D.V."/>
            <person name="Peng J."/>
            <person name="Tyler B.M."/>
            <person name="Heese A."/>
            <person name="Russinova E."/>
            <person name="He P."/>
            <person name="Shan L."/>
        </authorList>
    </citation>
    <scope>FUNCTION</scope>
    <scope>MUTAGENESIS OF ILE-104</scope>
    <scope>INTERACTION WITH BIK1</scope>
</reference>
<protein>
    <recommendedName>
        <fullName evidence="9">Probable E3 ubiquitin-protein ligase ATL44</fullName>
        <ecNumber evidence="9">2.3.2.27</ecNumber>
    </recommendedName>
    <alternativeName>
        <fullName evidence="8">RING-H2 finger A3a</fullName>
    </alternativeName>
    <alternativeName>
        <fullName evidence="9">RING-H2 finger protein ATL44</fullName>
    </alternativeName>
    <alternativeName>
        <fullName evidence="9">RING-H2 zinc finger protein RHA3a</fullName>
    </alternativeName>
    <alternativeName>
        <fullName evidence="9">RING-type E3 ubiquitin transferase ATL44</fullName>
    </alternativeName>
</protein>
<dbReference type="EC" id="2.3.2.27" evidence="9"/>
<dbReference type="EMBL" id="AF078824">
    <property type="protein sequence ID" value="AAC68673.1"/>
    <property type="molecule type" value="mRNA"/>
</dbReference>
<dbReference type="EMBL" id="AC007584">
    <property type="protein sequence ID" value="AAD32903.1"/>
    <property type="molecule type" value="Genomic_DNA"/>
</dbReference>
<dbReference type="EMBL" id="CP002685">
    <property type="protein sequence ID" value="AEC06631.1"/>
    <property type="molecule type" value="Genomic_DNA"/>
</dbReference>
<dbReference type="EMBL" id="AF370239">
    <property type="protein sequence ID" value="AAK44054.1"/>
    <property type="molecule type" value="mRNA"/>
</dbReference>
<dbReference type="EMBL" id="AY062961">
    <property type="protein sequence ID" value="AAL33807.1"/>
    <property type="molecule type" value="mRNA"/>
</dbReference>
<dbReference type="PIR" id="T51844">
    <property type="entry name" value="T51844"/>
</dbReference>
<dbReference type="RefSeq" id="NP_179337.1">
    <property type="nucleotide sequence ID" value="NM_127300.4"/>
</dbReference>
<dbReference type="SMR" id="O22755"/>
<dbReference type="STRING" id="3702.O22755"/>
<dbReference type="PaxDb" id="3702-AT2G17450.1"/>
<dbReference type="EnsemblPlants" id="AT2G17450.1">
    <property type="protein sequence ID" value="AT2G17450.1"/>
    <property type="gene ID" value="AT2G17450"/>
</dbReference>
<dbReference type="GeneID" id="816251"/>
<dbReference type="Gramene" id="AT2G17450.1">
    <property type="protein sequence ID" value="AT2G17450.1"/>
    <property type="gene ID" value="AT2G17450"/>
</dbReference>
<dbReference type="KEGG" id="ath:AT2G17450"/>
<dbReference type="Araport" id="AT2G17450"/>
<dbReference type="TAIR" id="AT2G17450">
    <property type="gene designation" value="RHA3A"/>
</dbReference>
<dbReference type="eggNOG" id="KOG0800">
    <property type="taxonomic scope" value="Eukaryota"/>
</dbReference>
<dbReference type="HOGENOM" id="CLU_013137_9_1_1"/>
<dbReference type="InParanoid" id="O22755"/>
<dbReference type="OMA" id="TAEMKDQ"/>
<dbReference type="OrthoDB" id="8062037at2759"/>
<dbReference type="PhylomeDB" id="O22755"/>
<dbReference type="UniPathway" id="UPA00143"/>
<dbReference type="PRO" id="PR:O22755"/>
<dbReference type="Proteomes" id="UP000006548">
    <property type="component" value="Chromosome 2"/>
</dbReference>
<dbReference type="ExpressionAtlas" id="O22755">
    <property type="expression patterns" value="baseline and differential"/>
</dbReference>
<dbReference type="GO" id="GO:0016020">
    <property type="term" value="C:membrane"/>
    <property type="evidence" value="ECO:0007669"/>
    <property type="project" value="UniProtKB-SubCell"/>
</dbReference>
<dbReference type="GO" id="GO:0061630">
    <property type="term" value="F:ubiquitin protein ligase activity"/>
    <property type="evidence" value="ECO:0000314"/>
    <property type="project" value="UniProtKB"/>
</dbReference>
<dbReference type="GO" id="GO:0008270">
    <property type="term" value="F:zinc ion binding"/>
    <property type="evidence" value="ECO:0007669"/>
    <property type="project" value="UniProtKB-KW"/>
</dbReference>
<dbReference type="GO" id="GO:0051865">
    <property type="term" value="P:protein autoubiquitination"/>
    <property type="evidence" value="ECO:0000314"/>
    <property type="project" value="UniProtKB"/>
</dbReference>
<dbReference type="GO" id="GO:0006513">
    <property type="term" value="P:protein monoubiquitination"/>
    <property type="evidence" value="ECO:0000314"/>
    <property type="project" value="UniProtKB"/>
</dbReference>
<dbReference type="GO" id="GO:0016567">
    <property type="term" value="P:protein ubiquitination"/>
    <property type="evidence" value="ECO:0000316"/>
    <property type="project" value="TAIR"/>
</dbReference>
<dbReference type="CDD" id="cd16461">
    <property type="entry name" value="RING-H2_EL5-like"/>
    <property type="match status" value="1"/>
</dbReference>
<dbReference type="Gene3D" id="3.30.40.10">
    <property type="entry name" value="Zinc/RING finger domain, C3HC4 (zinc finger)"/>
    <property type="match status" value="1"/>
</dbReference>
<dbReference type="InterPro" id="IPR052788">
    <property type="entry name" value="RING-type_E3_ligase_ATL"/>
</dbReference>
<dbReference type="InterPro" id="IPR001841">
    <property type="entry name" value="Znf_RING"/>
</dbReference>
<dbReference type="InterPro" id="IPR013083">
    <property type="entry name" value="Znf_RING/FYVE/PHD"/>
</dbReference>
<dbReference type="PANTHER" id="PTHR45798:SF94">
    <property type="entry name" value="E3 UBIQUITIN-PROTEIN LIGASE ATL44-RELATED"/>
    <property type="match status" value="1"/>
</dbReference>
<dbReference type="PANTHER" id="PTHR45798">
    <property type="entry name" value="RING-H2 FINGER PROTEIN ATL61-RELATED-RELATED"/>
    <property type="match status" value="1"/>
</dbReference>
<dbReference type="Pfam" id="PF13639">
    <property type="entry name" value="zf-RING_2"/>
    <property type="match status" value="1"/>
</dbReference>
<dbReference type="SMART" id="SM00184">
    <property type="entry name" value="RING"/>
    <property type="match status" value="1"/>
</dbReference>
<dbReference type="SUPFAM" id="SSF57850">
    <property type="entry name" value="RING/U-box"/>
    <property type="match status" value="1"/>
</dbReference>
<dbReference type="PROSITE" id="PS50089">
    <property type="entry name" value="ZF_RING_2"/>
    <property type="match status" value="1"/>
</dbReference>
<organism>
    <name type="scientific">Arabidopsis thaliana</name>
    <name type="common">Mouse-ear cress</name>
    <dbReference type="NCBI Taxonomy" id="3702"/>
    <lineage>
        <taxon>Eukaryota</taxon>
        <taxon>Viridiplantae</taxon>
        <taxon>Streptophyta</taxon>
        <taxon>Embryophyta</taxon>
        <taxon>Tracheophyta</taxon>
        <taxon>Spermatophyta</taxon>
        <taxon>Magnoliopsida</taxon>
        <taxon>eudicotyledons</taxon>
        <taxon>Gunneridae</taxon>
        <taxon>Pentapetalae</taxon>
        <taxon>rosids</taxon>
        <taxon>malvids</taxon>
        <taxon>Brassicales</taxon>
        <taxon>Brassicaceae</taxon>
        <taxon>Camelineae</taxon>
        <taxon>Arabidopsis</taxon>
    </lineage>
</organism>
<gene>
    <name evidence="7" type="primary">ATL44</name>
    <name evidence="8" type="synonym">RHA3A</name>
    <name evidence="10" type="ordered locus">At2g17450</name>
    <name type="ORF">F5J6.22</name>
    <name evidence="11" type="ORF">MJB20</name>
</gene>